<organismHost>
    <name type="scientific">Capsicum</name>
    <name type="common">peppers</name>
    <dbReference type="NCBI Taxonomy" id="4071"/>
</organismHost>
<dbReference type="EMBL" id="AF103776">
    <property type="protein sequence ID" value="AAD20287.1"/>
    <property type="molecule type" value="mRNA"/>
</dbReference>
<dbReference type="SMR" id="Q9WDG3"/>
<dbReference type="GO" id="GO:0019029">
    <property type="term" value="C:helical viral capsid"/>
    <property type="evidence" value="ECO:0007669"/>
    <property type="project" value="UniProtKB-KW"/>
</dbReference>
<dbReference type="GO" id="GO:0005198">
    <property type="term" value="F:structural molecule activity"/>
    <property type="evidence" value="ECO:0007669"/>
    <property type="project" value="InterPro"/>
</dbReference>
<dbReference type="Gene3D" id="1.20.120.70">
    <property type="entry name" value="Tobacco mosaic virus-like, coat protein"/>
    <property type="match status" value="1"/>
</dbReference>
<dbReference type="InterPro" id="IPR001337">
    <property type="entry name" value="TMV-like_coat"/>
</dbReference>
<dbReference type="InterPro" id="IPR036417">
    <property type="entry name" value="TMV-like_coat_sf"/>
</dbReference>
<dbReference type="Pfam" id="PF00721">
    <property type="entry name" value="TMV_coat"/>
    <property type="match status" value="1"/>
</dbReference>
<dbReference type="SUPFAM" id="SSF47195">
    <property type="entry name" value="TMV-like viral coat proteins"/>
    <property type="match status" value="1"/>
</dbReference>
<proteinExistence type="evidence at transcript level"/>
<sequence length="159" mass="17582">MAYTVSSANQLVYLGSVWADPLELQNLCTSALGNQFQTQQARTTVQQQFSDVWKTIPTATVRFPATGFKVFRYNAVLDSLVSALLGAFDTRNRIIEVENPQNPTTAETLDATKRVDDATVAIRASISNLMNELIRGTGMYNQALFEMASGFTWATIPYT</sequence>
<reference key="1">
    <citation type="submission" date="1998-11" db="EMBL/GenBank/DDBJ databases">
        <title>The coat protein gene of pepper mild mottle virus isolated from hot pepper in Korea.</title>
        <authorList>
            <person name="Sohn S.-H."/>
            <person name="Hahn J.-H."/>
            <person name="Hwang Y.-S."/>
        </authorList>
    </citation>
    <scope>NUCLEOTIDE SEQUENCE [MRNA]</scope>
</reference>
<evidence type="ECO:0000250" key="1"/>
<evidence type="ECO:0000305" key="2"/>
<name>CAPSD_PMMV0</name>
<accession>Q9WDG3</accession>
<keyword id="KW-0007">Acetylation</keyword>
<keyword id="KW-0167">Capsid protein</keyword>
<keyword id="KW-1139">Helical capsid protein</keyword>
<keyword id="KW-0946">Virion</keyword>
<gene>
    <name type="primary">CP</name>
</gene>
<comment type="function">
    <text>Capsid protein self-assembles to form rod-shaped virions about 18 nm in diameter with a central canal enclosing the viral genomic RNA.</text>
</comment>
<comment type="subcellular location">
    <subcellularLocation>
        <location evidence="2">Virion</location>
    </subcellularLocation>
</comment>
<comment type="similarity">
    <text evidence="2">Belongs to the virgaviridae capsid protein family.</text>
</comment>
<organism>
    <name type="scientific">Pepper mild mottle virus (strain P0)</name>
    <name type="common">PMMV</name>
    <dbReference type="NCBI Taxonomy" id="138303"/>
    <lineage>
        <taxon>Viruses</taxon>
        <taxon>Riboviria</taxon>
        <taxon>Orthornavirae</taxon>
        <taxon>Kitrinoviricota</taxon>
        <taxon>Alsuviricetes</taxon>
        <taxon>Martellivirales</taxon>
        <taxon>Virgaviridae</taxon>
        <taxon>Tobamovirus</taxon>
        <taxon>Pepper mild mottle virus</taxon>
    </lineage>
</organism>
<protein>
    <recommendedName>
        <fullName>Capsid protein</fullName>
    </recommendedName>
    <alternativeName>
        <fullName>Coat protein</fullName>
    </alternativeName>
</protein>
<feature type="initiator methionine" description="Removed; by host" evidence="1">
    <location>
        <position position="1"/>
    </location>
</feature>
<feature type="chain" id="PRO_0000144938" description="Capsid protein">
    <location>
        <begin position="2"/>
        <end position="159"/>
    </location>
</feature>
<feature type="modified residue" description="N-acetylalanine; by host" evidence="1">
    <location>
        <position position="2"/>
    </location>
</feature>